<protein>
    <recommendedName>
        <fullName evidence="1">3-hydroxyacyl-[acyl-carrier-protein] dehydratase FabZ</fullName>
        <ecNumber evidence="1">4.2.1.59</ecNumber>
    </recommendedName>
    <alternativeName>
        <fullName evidence="1">(3R)-hydroxymyristoyl-[acyl-carrier-protein] dehydratase</fullName>
        <shortName evidence="1">(3R)-hydroxymyristoyl-ACP dehydrase</shortName>
    </alternativeName>
    <alternativeName>
        <fullName evidence="1">Beta-hydroxyacyl-ACP dehydratase</fullName>
    </alternativeName>
</protein>
<feature type="chain" id="PRO_1000134717" description="3-hydroxyacyl-[acyl-carrier-protein] dehydratase FabZ">
    <location>
        <begin position="1"/>
        <end position="140"/>
    </location>
</feature>
<feature type="active site" evidence="1">
    <location>
        <position position="47"/>
    </location>
</feature>
<sequence length="140" mass="15298">MIDIQGIKEALPHRYPMLLVDRVLEVSEDTIVAIKNVTINEPFFNGHFPQYPVMPGVLIMEALAQTAGVLELSKPENKGKLVFYAGMDKVKFKKQVVPGDQLVMTATFVKRRGTIAVVEAKAEVDGKLAASGILTFAIGN</sequence>
<dbReference type="EC" id="4.2.1.59" evidence="1"/>
<dbReference type="EMBL" id="CP000920">
    <property type="protein sequence ID" value="ACO22075.1"/>
    <property type="molecule type" value="Genomic_DNA"/>
</dbReference>
<dbReference type="RefSeq" id="WP_000565514.1">
    <property type="nucleotide sequence ID" value="NC_012467.1"/>
</dbReference>
<dbReference type="SMR" id="C1CIS5"/>
<dbReference type="GeneID" id="45652122"/>
<dbReference type="KEGG" id="spp:SPP_0455"/>
<dbReference type="HOGENOM" id="CLU_078912_3_0_9"/>
<dbReference type="GO" id="GO:0005737">
    <property type="term" value="C:cytoplasm"/>
    <property type="evidence" value="ECO:0007669"/>
    <property type="project" value="UniProtKB-SubCell"/>
</dbReference>
<dbReference type="GO" id="GO:0016020">
    <property type="term" value="C:membrane"/>
    <property type="evidence" value="ECO:0007669"/>
    <property type="project" value="GOC"/>
</dbReference>
<dbReference type="GO" id="GO:0019171">
    <property type="term" value="F:(3R)-hydroxyacyl-[acyl-carrier-protein] dehydratase activity"/>
    <property type="evidence" value="ECO:0007669"/>
    <property type="project" value="UniProtKB-EC"/>
</dbReference>
<dbReference type="GO" id="GO:0006633">
    <property type="term" value="P:fatty acid biosynthetic process"/>
    <property type="evidence" value="ECO:0007669"/>
    <property type="project" value="UniProtKB-UniRule"/>
</dbReference>
<dbReference type="GO" id="GO:0009245">
    <property type="term" value="P:lipid A biosynthetic process"/>
    <property type="evidence" value="ECO:0007669"/>
    <property type="project" value="UniProtKB-UniRule"/>
</dbReference>
<dbReference type="CDD" id="cd01288">
    <property type="entry name" value="FabZ"/>
    <property type="match status" value="1"/>
</dbReference>
<dbReference type="FunFam" id="3.10.129.10:FF:000001">
    <property type="entry name" value="3-hydroxyacyl-[acyl-carrier-protein] dehydratase FabZ"/>
    <property type="match status" value="1"/>
</dbReference>
<dbReference type="Gene3D" id="3.10.129.10">
    <property type="entry name" value="Hotdog Thioesterase"/>
    <property type="match status" value="1"/>
</dbReference>
<dbReference type="HAMAP" id="MF_00406">
    <property type="entry name" value="FabZ"/>
    <property type="match status" value="1"/>
</dbReference>
<dbReference type="InterPro" id="IPR013114">
    <property type="entry name" value="FabA_FabZ"/>
</dbReference>
<dbReference type="InterPro" id="IPR010084">
    <property type="entry name" value="FabZ"/>
</dbReference>
<dbReference type="InterPro" id="IPR029069">
    <property type="entry name" value="HotDog_dom_sf"/>
</dbReference>
<dbReference type="NCBIfam" id="TIGR01750">
    <property type="entry name" value="fabZ"/>
    <property type="match status" value="1"/>
</dbReference>
<dbReference type="NCBIfam" id="NF000582">
    <property type="entry name" value="PRK00006.1"/>
    <property type="match status" value="1"/>
</dbReference>
<dbReference type="PANTHER" id="PTHR30272">
    <property type="entry name" value="3-HYDROXYACYL-[ACYL-CARRIER-PROTEIN] DEHYDRATASE"/>
    <property type="match status" value="1"/>
</dbReference>
<dbReference type="PANTHER" id="PTHR30272:SF1">
    <property type="entry name" value="3-HYDROXYACYL-[ACYL-CARRIER-PROTEIN] DEHYDRATASE"/>
    <property type="match status" value="1"/>
</dbReference>
<dbReference type="Pfam" id="PF07977">
    <property type="entry name" value="FabA"/>
    <property type="match status" value="1"/>
</dbReference>
<dbReference type="SUPFAM" id="SSF54637">
    <property type="entry name" value="Thioesterase/thiol ester dehydrase-isomerase"/>
    <property type="match status" value="1"/>
</dbReference>
<gene>
    <name evidence="1" type="primary">fabZ</name>
    <name type="ordered locus">SPP_0455</name>
</gene>
<comment type="function">
    <text evidence="1">Involved in unsaturated fatty acids biosynthesis. Catalyzes the dehydration of short chain beta-hydroxyacyl-ACPs and long chain saturated and unsaturated beta-hydroxyacyl-ACPs.</text>
</comment>
<comment type="catalytic activity">
    <reaction evidence="1">
        <text>a (3R)-hydroxyacyl-[ACP] = a (2E)-enoyl-[ACP] + H2O</text>
        <dbReference type="Rhea" id="RHEA:13097"/>
        <dbReference type="Rhea" id="RHEA-COMP:9925"/>
        <dbReference type="Rhea" id="RHEA-COMP:9945"/>
        <dbReference type="ChEBI" id="CHEBI:15377"/>
        <dbReference type="ChEBI" id="CHEBI:78784"/>
        <dbReference type="ChEBI" id="CHEBI:78827"/>
        <dbReference type="EC" id="4.2.1.59"/>
    </reaction>
</comment>
<comment type="subcellular location">
    <subcellularLocation>
        <location evidence="1">Cytoplasm</location>
    </subcellularLocation>
</comment>
<comment type="similarity">
    <text evidence="1">Belongs to the thioester dehydratase family. FabZ subfamily.</text>
</comment>
<accession>C1CIS5</accession>
<name>FABZ_STRZP</name>
<organism>
    <name type="scientific">Streptococcus pneumoniae (strain P1031)</name>
    <dbReference type="NCBI Taxonomy" id="488223"/>
    <lineage>
        <taxon>Bacteria</taxon>
        <taxon>Bacillati</taxon>
        <taxon>Bacillota</taxon>
        <taxon>Bacilli</taxon>
        <taxon>Lactobacillales</taxon>
        <taxon>Streptococcaceae</taxon>
        <taxon>Streptococcus</taxon>
    </lineage>
</organism>
<evidence type="ECO:0000255" key="1">
    <source>
        <dbReference type="HAMAP-Rule" id="MF_00406"/>
    </source>
</evidence>
<proteinExistence type="inferred from homology"/>
<reference key="1">
    <citation type="journal article" date="2010" name="Genome Biol.">
        <title>Structure and dynamics of the pan-genome of Streptococcus pneumoniae and closely related species.</title>
        <authorList>
            <person name="Donati C."/>
            <person name="Hiller N.L."/>
            <person name="Tettelin H."/>
            <person name="Muzzi A."/>
            <person name="Croucher N.J."/>
            <person name="Angiuoli S.V."/>
            <person name="Oggioni M."/>
            <person name="Dunning Hotopp J.C."/>
            <person name="Hu F.Z."/>
            <person name="Riley D.R."/>
            <person name="Covacci A."/>
            <person name="Mitchell T.J."/>
            <person name="Bentley S.D."/>
            <person name="Kilian M."/>
            <person name="Ehrlich G.D."/>
            <person name="Rappuoli R."/>
            <person name="Moxon E.R."/>
            <person name="Masignani V."/>
        </authorList>
    </citation>
    <scope>NUCLEOTIDE SEQUENCE [LARGE SCALE GENOMIC DNA]</scope>
    <source>
        <strain>P1031</strain>
    </source>
</reference>
<keyword id="KW-0963">Cytoplasm</keyword>
<keyword id="KW-0441">Lipid A biosynthesis</keyword>
<keyword id="KW-0444">Lipid biosynthesis</keyword>
<keyword id="KW-0443">Lipid metabolism</keyword>
<keyword id="KW-0456">Lyase</keyword>